<name>IF2_MYCSS</name>
<feature type="chain" id="PRO_1000008283" description="Translation initiation factor IF-2">
    <location>
        <begin position="1"/>
        <end position="920"/>
    </location>
</feature>
<feature type="domain" description="tr-type G">
    <location>
        <begin position="416"/>
        <end position="588"/>
    </location>
</feature>
<feature type="region of interest" description="Disordered" evidence="3">
    <location>
        <begin position="33"/>
        <end position="305"/>
    </location>
</feature>
<feature type="region of interest" description="G1" evidence="1">
    <location>
        <begin position="425"/>
        <end position="432"/>
    </location>
</feature>
<feature type="region of interest" description="G2" evidence="1">
    <location>
        <begin position="450"/>
        <end position="454"/>
    </location>
</feature>
<feature type="region of interest" description="G3" evidence="1">
    <location>
        <begin position="475"/>
        <end position="478"/>
    </location>
</feature>
<feature type="region of interest" description="G4" evidence="1">
    <location>
        <begin position="529"/>
        <end position="532"/>
    </location>
</feature>
<feature type="region of interest" description="G5" evidence="1">
    <location>
        <begin position="565"/>
        <end position="567"/>
    </location>
</feature>
<feature type="compositionally biased region" description="Low complexity" evidence="3">
    <location>
        <begin position="53"/>
        <end position="86"/>
    </location>
</feature>
<feature type="compositionally biased region" description="Pro residues" evidence="3">
    <location>
        <begin position="87"/>
        <end position="159"/>
    </location>
</feature>
<feature type="compositionally biased region" description="Pro residues" evidence="3">
    <location>
        <begin position="179"/>
        <end position="193"/>
    </location>
</feature>
<feature type="compositionally biased region" description="Pro residues" evidence="3">
    <location>
        <begin position="201"/>
        <end position="212"/>
    </location>
</feature>
<feature type="compositionally biased region" description="Gly residues" evidence="3">
    <location>
        <begin position="225"/>
        <end position="291"/>
    </location>
</feature>
<feature type="compositionally biased region" description="Basic residues" evidence="3">
    <location>
        <begin position="295"/>
        <end position="304"/>
    </location>
</feature>
<feature type="binding site" evidence="2">
    <location>
        <begin position="425"/>
        <end position="432"/>
    </location>
    <ligand>
        <name>GTP</name>
        <dbReference type="ChEBI" id="CHEBI:37565"/>
    </ligand>
</feature>
<feature type="binding site" evidence="2">
    <location>
        <begin position="475"/>
        <end position="479"/>
    </location>
    <ligand>
        <name>GTP</name>
        <dbReference type="ChEBI" id="CHEBI:37565"/>
    </ligand>
</feature>
<feature type="binding site" evidence="2">
    <location>
        <begin position="529"/>
        <end position="532"/>
    </location>
    <ligand>
        <name>GTP</name>
        <dbReference type="ChEBI" id="CHEBI:37565"/>
    </ligand>
</feature>
<sequence length="920" mass="95439">MAGKARVHELAKELGVTSKELLATLKEQGEFVKSASSTVEAPVARRLREKFGSKSAPAPAKSAGNGATAAPATSATPATAAAAAAPAPAPAPQAPAKPAAPKPAAPQPVAPPQPAAAAPTPPPAASAPAPAPAPSAPAPSRPGPTPGPRPGPAPKPAPRTPRVGNNPFSTQQPVDRPIPRPQPRPGAPRPGTPRPGMSPNNMPPRPAGPRPGAPAGRPGGPRPGPGGRGPGGGGGRPGGPGGGGGGNYRGGGAGGGGGAGGAAAGGFRGRPGGGGRPGQRGGAAGAFGRPGGAPKRGRKSKRAKRAEYENMQAPVVGGVRLPHGNGETIRLARGASLSDFAEKINANPASLVQALFNLGEMVTATQSVNDETLELLGSEMNYVVQVVSPEDEDRELLESFDLSYGEDAGDEGDLEIRPPVVTVMGHVDHGKTRLLDTIRQANVREGEAGGITQHIGAYQVLTELDGNERLITFIDTPGHEAFTAMRARGAKATDIAILVVAADDGVMPQTVEAINHAQAADVPVVVAVNKIDKEGADPQKIRGQLTEYGLIPEEYGGDTMFVDISAKQGTNIDALLEAVLLTADASLDLRANPDMEAQGVAIEAHLDRGRGPVATVLIQRGTLRVGDSIVAGDAYGRVRRMVDEHGEDVEAAMPSRPVQVIGFTSVPGAGDNLLVVDEDRIARQIADRRSARKRNALAARSRKRISLEDLDSALKETSQLNLILKGDNAGTVEALEEALLGIQVDDEVELRVIDRGVGGVTETNVNLASASDAIIIGFNVRAEGKATELANREGVEIRYYSVIYQAIDEIESALKGMLKPVYEEKELGRAEIRAIFRSSKVGNIAGCLVQSGIMRRNAKARLLRDNVVVAENLTVSSLRREKEDVTEVRDGYECGLTLTYSDIKEGDVIETYELVEKART</sequence>
<organism>
    <name type="scientific">Mycobacterium sp. (strain MCS)</name>
    <dbReference type="NCBI Taxonomy" id="164756"/>
    <lineage>
        <taxon>Bacteria</taxon>
        <taxon>Bacillati</taxon>
        <taxon>Actinomycetota</taxon>
        <taxon>Actinomycetes</taxon>
        <taxon>Mycobacteriales</taxon>
        <taxon>Mycobacteriaceae</taxon>
        <taxon>Mycobacterium</taxon>
    </lineage>
</organism>
<evidence type="ECO:0000250" key="1"/>
<evidence type="ECO:0000255" key="2">
    <source>
        <dbReference type="HAMAP-Rule" id="MF_00100"/>
    </source>
</evidence>
<evidence type="ECO:0000256" key="3">
    <source>
        <dbReference type="SAM" id="MobiDB-lite"/>
    </source>
</evidence>
<dbReference type="EMBL" id="CP000384">
    <property type="protein sequence ID" value="ABG08190.1"/>
    <property type="molecule type" value="Genomic_DNA"/>
</dbReference>
<dbReference type="SMR" id="Q1BA94"/>
<dbReference type="KEGG" id="mmc:Mmcs_2082"/>
<dbReference type="HOGENOM" id="CLU_006301_9_2_11"/>
<dbReference type="GO" id="GO:0005829">
    <property type="term" value="C:cytosol"/>
    <property type="evidence" value="ECO:0007669"/>
    <property type="project" value="TreeGrafter"/>
</dbReference>
<dbReference type="GO" id="GO:0005525">
    <property type="term" value="F:GTP binding"/>
    <property type="evidence" value="ECO:0007669"/>
    <property type="project" value="UniProtKB-KW"/>
</dbReference>
<dbReference type="GO" id="GO:0003924">
    <property type="term" value="F:GTPase activity"/>
    <property type="evidence" value="ECO:0007669"/>
    <property type="project" value="UniProtKB-UniRule"/>
</dbReference>
<dbReference type="GO" id="GO:0003743">
    <property type="term" value="F:translation initiation factor activity"/>
    <property type="evidence" value="ECO:0007669"/>
    <property type="project" value="UniProtKB-UniRule"/>
</dbReference>
<dbReference type="CDD" id="cd01887">
    <property type="entry name" value="IF2_eIF5B"/>
    <property type="match status" value="1"/>
</dbReference>
<dbReference type="CDD" id="cd03702">
    <property type="entry name" value="IF2_mtIF2_II"/>
    <property type="match status" value="1"/>
</dbReference>
<dbReference type="CDD" id="cd03692">
    <property type="entry name" value="mtIF2_IVc"/>
    <property type="match status" value="1"/>
</dbReference>
<dbReference type="FunFam" id="1.10.10.2480:FF:000003">
    <property type="entry name" value="Translation initiation factor IF-2"/>
    <property type="match status" value="1"/>
</dbReference>
<dbReference type="FunFam" id="2.40.30.10:FF:000007">
    <property type="entry name" value="Translation initiation factor IF-2"/>
    <property type="match status" value="1"/>
</dbReference>
<dbReference type="FunFam" id="2.40.30.10:FF:000008">
    <property type="entry name" value="Translation initiation factor IF-2"/>
    <property type="match status" value="1"/>
</dbReference>
<dbReference type="FunFam" id="3.40.50.10050:FF:000001">
    <property type="entry name" value="Translation initiation factor IF-2"/>
    <property type="match status" value="1"/>
</dbReference>
<dbReference type="FunFam" id="3.40.50.300:FF:000019">
    <property type="entry name" value="Translation initiation factor IF-2"/>
    <property type="match status" value="1"/>
</dbReference>
<dbReference type="Gene3D" id="1.10.10.2480">
    <property type="match status" value="1"/>
</dbReference>
<dbReference type="Gene3D" id="3.40.50.300">
    <property type="entry name" value="P-loop containing nucleotide triphosphate hydrolases"/>
    <property type="match status" value="1"/>
</dbReference>
<dbReference type="Gene3D" id="2.40.30.10">
    <property type="entry name" value="Translation factors"/>
    <property type="match status" value="2"/>
</dbReference>
<dbReference type="Gene3D" id="3.40.50.10050">
    <property type="entry name" value="Translation initiation factor IF- 2, domain 3"/>
    <property type="match status" value="1"/>
</dbReference>
<dbReference type="HAMAP" id="MF_00100_B">
    <property type="entry name" value="IF_2_B"/>
    <property type="match status" value="1"/>
</dbReference>
<dbReference type="InterPro" id="IPR053905">
    <property type="entry name" value="EF-G-like_DII"/>
</dbReference>
<dbReference type="InterPro" id="IPR044145">
    <property type="entry name" value="IF2_II"/>
</dbReference>
<dbReference type="InterPro" id="IPR006847">
    <property type="entry name" value="IF2_N"/>
</dbReference>
<dbReference type="InterPro" id="IPR027417">
    <property type="entry name" value="P-loop_NTPase"/>
</dbReference>
<dbReference type="InterPro" id="IPR005225">
    <property type="entry name" value="Small_GTP-bd"/>
</dbReference>
<dbReference type="InterPro" id="IPR000795">
    <property type="entry name" value="T_Tr_GTP-bd_dom"/>
</dbReference>
<dbReference type="InterPro" id="IPR000178">
    <property type="entry name" value="TF_IF2_bacterial-like"/>
</dbReference>
<dbReference type="InterPro" id="IPR015760">
    <property type="entry name" value="TIF_IF2"/>
</dbReference>
<dbReference type="InterPro" id="IPR023115">
    <property type="entry name" value="TIF_IF2_dom3"/>
</dbReference>
<dbReference type="InterPro" id="IPR036925">
    <property type="entry name" value="TIF_IF2_dom3_sf"/>
</dbReference>
<dbReference type="InterPro" id="IPR009000">
    <property type="entry name" value="Transl_B-barrel_sf"/>
</dbReference>
<dbReference type="NCBIfam" id="TIGR00487">
    <property type="entry name" value="IF-2"/>
    <property type="match status" value="1"/>
</dbReference>
<dbReference type="NCBIfam" id="TIGR00231">
    <property type="entry name" value="small_GTP"/>
    <property type="match status" value="1"/>
</dbReference>
<dbReference type="PANTHER" id="PTHR43381:SF5">
    <property type="entry name" value="TR-TYPE G DOMAIN-CONTAINING PROTEIN"/>
    <property type="match status" value="1"/>
</dbReference>
<dbReference type="PANTHER" id="PTHR43381">
    <property type="entry name" value="TRANSLATION INITIATION FACTOR IF-2-RELATED"/>
    <property type="match status" value="1"/>
</dbReference>
<dbReference type="Pfam" id="PF22042">
    <property type="entry name" value="EF-G_D2"/>
    <property type="match status" value="1"/>
</dbReference>
<dbReference type="Pfam" id="PF00009">
    <property type="entry name" value="GTP_EFTU"/>
    <property type="match status" value="1"/>
</dbReference>
<dbReference type="Pfam" id="PF11987">
    <property type="entry name" value="IF-2"/>
    <property type="match status" value="1"/>
</dbReference>
<dbReference type="Pfam" id="PF04760">
    <property type="entry name" value="IF2_N"/>
    <property type="match status" value="2"/>
</dbReference>
<dbReference type="PRINTS" id="PR01217">
    <property type="entry name" value="PRICHEXTENSN"/>
</dbReference>
<dbReference type="SUPFAM" id="SSF52156">
    <property type="entry name" value="Initiation factor IF2/eIF5b, domain 3"/>
    <property type="match status" value="1"/>
</dbReference>
<dbReference type="SUPFAM" id="SSF52540">
    <property type="entry name" value="P-loop containing nucleoside triphosphate hydrolases"/>
    <property type="match status" value="1"/>
</dbReference>
<dbReference type="SUPFAM" id="SSF50447">
    <property type="entry name" value="Translation proteins"/>
    <property type="match status" value="2"/>
</dbReference>
<dbReference type="PROSITE" id="PS51722">
    <property type="entry name" value="G_TR_2"/>
    <property type="match status" value="1"/>
</dbReference>
<dbReference type="PROSITE" id="PS01176">
    <property type="entry name" value="IF2"/>
    <property type="match status" value="1"/>
</dbReference>
<comment type="function">
    <text evidence="2">One of the essential components for the initiation of protein synthesis. Protects formylmethionyl-tRNA from spontaneous hydrolysis and promotes its binding to the 30S ribosomal subunits. Also involved in the hydrolysis of GTP during the formation of the 70S ribosomal complex.</text>
</comment>
<comment type="subcellular location">
    <subcellularLocation>
        <location evidence="2">Cytoplasm</location>
    </subcellularLocation>
</comment>
<comment type="similarity">
    <text evidence="2">Belongs to the TRAFAC class translation factor GTPase superfamily. Classic translation factor GTPase family. IF-2 subfamily.</text>
</comment>
<proteinExistence type="inferred from homology"/>
<reference key="1">
    <citation type="submission" date="2006-06" db="EMBL/GenBank/DDBJ databases">
        <title>Complete sequence of chromosome of Mycobacterium sp. MCS.</title>
        <authorList>
            <consortium name="US DOE Joint Genome Institute"/>
            <person name="Copeland A."/>
            <person name="Lucas S."/>
            <person name="Lapidus A."/>
            <person name="Barry K."/>
            <person name="Detter J.C."/>
            <person name="Glavina del Rio T."/>
            <person name="Hammon N."/>
            <person name="Israni S."/>
            <person name="Dalin E."/>
            <person name="Tice H."/>
            <person name="Pitluck S."/>
            <person name="Martinez M."/>
            <person name="Schmutz J."/>
            <person name="Larimer F."/>
            <person name="Land M."/>
            <person name="Hauser L."/>
            <person name="Kyrpides N."/>
            <person name="Kim E."/>
            <person name="Miller C.D."/>
            <person name="Hughes J.E."/>
            <person name="Anderson A.J."/>
            <person name="Sims R.C."/>
            <person name="Richardson P."/>
        </authorList>
    </citation>
    <scope>NUCLEOTIDE SEQUENCE [LARGE SCALE GENOMIC DNA]</scope>
    <source>
        <strain>MCS</strain>
    </source>
</reference>
<protein>
    <recommendedName>
        <fullName evidence="2">Translation initiation factor IF-2</fullName>
    </recommendedName>
</protein>
<accession>Q1BA94</accession>
<gene>
    <name evidence="2" type="primary">infB</name>
    <name type="ordered locus">Mmcs_2082</name>
</gene>
<keyword id="KW-0963">Cytoplasm</keyword>
<keyword id="KW-0342">GTP-binding</keyword>
<keyword id="KW-0396">Initiation factor</keyword>
<keyword id="KW-0547">Nucleotide-binding</keyword>
<keyword id="KW-0648">Protein biosynthesis</keyword>